<name>MTNN_BACAH</name>
<gene>
    <name evidence="1" type="primary">mtnN</name>
    <name type="ordered locus">BALH_3959</name>
</gene>
<feature type="chain" id="PRO_0000359281" description="5'-methylthioadenosine/S-adenosylhomocysteine nucleosidase">
    <location>
        <begin position="1"/>
        <end position="231"/>
    </location>
</feature>
<feature type="active site" description="Proton acceptor" evidence="1">
    <location>
        <position position="12"/>
    </location>
</feature>
<feature type="active site" description="Proton donor" evidence="1">
    <location>
        <position position="198"/>
    </location>
</feature>
<feature type="binding site" evidence="1">
    <location>
        <position position="78"/>
    </location>
    <ligand>
        <name>substrate</name>
    </ligand>
</feature>
<feature type="binding site" evidence="1">
    <location>
        <position position="153"/>
    </location>
    <ligand>
        <name>substrate</name>
    </ligand>
</feature>
<feature type="binding site" evidence="1">
    <location>
        <begin position="174"/>
        <end position="175"/>
    </location>
    <ligand>
        <name>substrate</name>
    </ligand>
</feature>
<protein>
    <recommendedName>
        <fullName evidence="1">5'-methylthioadenosine/S-adenosylhomocysteine nucleosidase</fullName>
        <shortName evidence="1">MTA/SAH nucleosidase</shortName>
        <shortName evidence="1">MTAN</shortName>
        <ecNumber evidence="1">3.2.2.9</ecNumber>
    </recommendedName>
    <alternativeName>
        <fullName evidence="1">5'-deoxyadenosine nucleosidase</fullName>
        <shortName evidence="1">DOA nucleosidase</shortName>
        <shortName evidence="1">dAdo nucleosidase</shortName>
    </alternativeName>
    <alternativeName>
        <fullName evidence="1">5'-methylthioadenosine nucleosidase</fullName>
        <shortName evidence="1">MTA nucleosidase</shortName>
    </alternativeName>
    <alternativeName>
        <fullName evidence="1">S-adenosylhomocysteine nucleosidase</fullName>
        <shortName evidence="1">AdoHcy nucleosidase</shortName>
        <shortName evidence="1">SAH nucleosidase</shortName>
        <shortName evidence="1">SRH nucleosidase</shortName>
    </alternativeName>
</protein>
<dbReference type="EC" id="3.2.2.9" evidence="1"/>
<dbReference type="EMBL" id="CP000485">
    <property type="protein sequence ID" value="ABK87180.1"/>
    <property type="molecule type" value="Genomic_DNA"/>
</dbReference>
<dbReference type="RefSeq" id="WP_001217039.1">
    <property type="nucleotide sequence ID" value="NC_008600.1"/>
</dbReference>
<dbReference type="SMR" id="A0RIY7"/>
<dbReference type="GeneID" id="75087509"/>
<dbReference type="KEGG" id="btl:BALH_3959"/>
<dbReference type="HOGENOM" id="CLU_031248_2_2_9"/>
<dbReference type="UniPathway" id="UPA00904">
    <property type="reaction ID" value="UER00871"/>
</dbReference>
<dbReference type="GO" id="GO:0005829">
    <property type="term" value="C:cytosol"/>
    <property type="evidence" value="ECO:0007669"/>
    <property type="project" value="TreeGrafter"/>
</dbReference>
<dbReference type="GO" id="GO:0008782">
    <property type="term" value="F:adenosylhomocysteine nucleosidase activity"/>
    <property type="evidence" value="ECO:0007669"/>
    <property type="project" value="UniProtKB-UniRule"/>
</dbReference>
<dbReference type="GO" id="GO:0008930">
    <property type="term" value="F:methylthioadenosine nucleosidase activity"/>
    <property type="evidence" value="ECO:0007669"/>
    <property type="project" value="UniProtKB-UniRule"/>
</dbReference>
<dbReference type="GO" id="GO:0019509">
    <property type="term" value="P:L-methionine salvage from methylthioadenosine"/>
    <property type="evidence" value="ECO:0007669"/>
    <property type="project" value="UniProtKB-UniRule"/>
</dbReference>
<dbReference type="GO" id="GO:0019284">
    <property type="term" value="P:L-methionine salvage from S-adenosylmethionine"/>
    <property type="evidence" value="ECO:0007669"/>
    <property type="project" value="TreeGrafter"/>
</dbReference>
<dbReference type="GO" id="GO:0009164">
    <property type="term" value="P:nucleoside catabolic process"/>
    <property type="evidence" value="ECO:0007669"/>
    <property type="project" value="InterPro"/>
</dbReference>
<dbReference type="CDD" id="cd09008">
    <property type="entry name" value="MTAN"/>
    <property type="match status" value="1"/>
</dbReference>
<dbReference type="FunFam" id="3.40.50.1580:FF:000001">
    <property type="entry name" value="MTA/SAH nucleosidase family protein"/>
    <property type="match status" value="1"/>
</dbReference>
<dbReference type="Gene3D" id="3.40.50.1580">
    <property type="entry name" value="Nucleoside phosphorylase domain"/>
    <property type="match status" value="1"/>
</dbReference>
<dbReference type="HAMAP" id="MF_01684">
    <property type="entry name" value="Salvage_MtnN"/>
    <property type="match status" value="1"/>
</dbReference>
<dbReference type="InterPro" id="IPR010049">
    <property type="entry name" value="MTA_SAH_Nsdase"/>
</dbReference>
<dbReference type="InterPro" id="IPR000845">
    <property type="entry name" value="Nucleoside_phosphorylase_d"/>
</dbReference>
<dbReference type="InterPro" id="IPR035994">
    <property type="entry name" value="Nucleoside_phosphorylase_sf"/>
</dbReference>
<dbReference type="NCBIfam" id="TIGR01704">
    <property type="entry name" value="MTA_SAH-Nsdase"/>
    <property type="match status" value="1"/>
</dbReference>
<dbReference type="NCBIfam" id="NF004079">
    <property type="entry name" value="PRK05584.1"/>
    <property type="match status" value="1"/>
</dbReference>
<dbReference type="PANTHER" id="PTHR46832">
    <property type="entry name" value="5'-METHYLTHIOADENOSINE/S-ADENOSYLHOMOCYSTEINE NUCLEOSIDASE"/>
    <property type="match status" value="1"/>
</dbReference>
<dbReference type="PANTHER" id="PTHR46832:SF1">
    <property type="entry name" value="5'-METHYLTHIOADENOSINE_S-ADENOSYLHOMOCYSTEINE NUCLEOSIDASE"/>
    <property type="match status" value="1"/>
</dbReference>
<dbReference type="Pfam" id="PF01048">
    <property type="entry name" value="PNP_UDP_1"/>
    <property type="match status" value="1"/>
</dbReference>
<dbReference type="SUPFAM" id="SSF53167">
    <property type="entry name" value="Purine and uridine phosphorylases"/>
    <property type="match status" value="1"/>
</dbReference>
<comment type="function">
    <text evidence="1">Catalyzes the irreversible cleavage of the glycosidic bond in both 5'-methylthioadenosine (MTA) and S-adenosylhomocysteine (SAH/AdoHcy) to adenine and the corresponding thioribose, 5'-methylthioribose and S-ribosylhomocysteine, respectively. Also cleaves 5'-deoxyadenosine, a toxic by-product of radical S-adenosylmethionine (SAM) enzymes, into 5-deoxyribose and adenine.</text>
</comment>
<comment type="catalytic activity">
    <reaction evidence="1">
        <text>S-adenosyl-L-homocysteine + H2O = S-(5-deoxy-D-ribos-5-yl)-L-homocysteine + adenine</text>
        <dbReference type="Rhea" id="RHEA:17805"/>
        <dbReference type="ChEBI" id="CHEBI:15377"/>
        <dbReference type="ChEBI" id="CHEBI:16708"/>
        <dbReference type="ChEBI" id="CHEBI:57856"/>
        <dbReference type="ChEBI" id="CHEBI:58195"/>
        <dbReference type="EC" id="3.2.2.9"/>
    </reaction>
</comment>
<comment type="catalytic activity">
    <reaction evidence="1">
        <text>S-methyl-5'-thioadenosine + H2O = 5-(methylsulfanyl)-D-ribose + adenine</text>
        <dbReference type="Rhea" id="RHEA:13617"/>
        <dbReference type="ChEBI" id="CHEBI:15377"/>
        <dbReference type="ChEBI" id="CHEBI:16708"/>
        <dbReference type="ChEBI" id="CHEBI:17509"/>
        <dbReference type="ChEBI" id="CHEBI:78440"/>
        <dbReference type="EC" id="3.2.2.9"/>
    </reaction>
</comment>
<comment type="catalytic activity">
    <reaction evidence="1">
        <text>5'-deoxyadenosine + H2O = 5-deoxy-D-ribose + adenine</text>
        <dbReference type="Rhea" id="RHEA:29859"/>
        <dbReference type="ChEBI" id="CHEBI:15377"/>
        <dbReference type="ChEBI" id="CHEBI:16708"/>
        <dbReference type="ChEBI" id="CHEBI:17319"/>
        <dbReference type="ChEBI" id="CHEBI:149540"/>
        <dbReference type="EC" id="3.2.2.9"/>
    </reaction>
    <physiologicalReaction direction="left-to-right" evidence="1">
        <dbReference type="Rhea" id="RHEA:29860"/>
    </physiologicalReaction>
</comment>
<comment type="pathway">
    <text evidence="1">Amino-acid biosynthesis; L-methionine biosynthesis via salvage pathway; S-methyl-5-thio-alpha-D-ribose 1-phosphate from S-methyl-5'-thioadenosine (hydrolase route): step 1/2.</text>
</comment>
<comment type="similarity">
    <text evidence="1">Belongs to the PNP/UDP phosphorylase family. MtnN subfamily.</text>
</comment>
<evidence type="ECO:0000255" key="1">
    <source>
        <dbReference type="HAMAP-Rule" id="MF_01684"/>
    </source>
</evidence>
<accession>A0RIY7</accession>
<proteinExistence type="inferred from homology"/>
<keyword id="KW-0028">Amino-acid biosynthesis</keyword>
<keyword id="KW-0378">Hydrolase</keyword>
<keyword id="KW-0486">Methionine biosynthesis</keyword>
<reference key="1">
    <citation type="journal article" date="2007" name="J. Bacteriol.">
        <title>The complete genome sequence of Bacillus thuringiensis Al Hakam.</title>
        <authorList>
            <person name="Challacombe J.F."/>
            <person name="Altherr M.R."/>
            <person name="Xie G."/>
            <person name="Bhotika S.S."/>
            <person name="Brown N."/>
            <person name="Bruce D."/>
            <person name="Campbell C.S."/>
            <person name="Campbell M.L."/>
            <person name="Chen J."/>
            <person name="Chertkov O."/>
            <person name="Cleland C."/>
            <person name="Dimitrijevic M."/>
            <person name="Doggett N.A."/>
            <person name="Fawcett J.J."/>
            <person name="Glavina T."/>
            <person name="Goodwin L.A."/>
            <person name="Green L.D."/>
            <person name="Han C.S."/>
            <person name="Hill K.K."/>
            <person name="Hitchcock P."/>
            <person name="Jackson P.J."/>
            <person name="Keim P."/>
            <person name="Kewalramani A.R."/>
            <person name="Longmire J."/>
            <person name="Lucas S."/>
            <person name="Malfatti S."/>
            <person name="Martinez D."/>
            <person name="McMurry K."/>
            <person name="Meincke L.J."/>
            <person name="Misra M."/>
            <person name="Moseman B.L."/>
            <person name="Mundt M."/>
            <person name="Munk A.C."/>
            <person name="Okinaka R.T."/>
            <person name="Parson-Quintana B."/>
            <person name="Reilly L.P."/>
            <person name="Richardson P."/>
            <person name="Robinson D.L."/>
            <person name="Saunders E."/>
            <person name="Tapia R."/>
            <person name="Tesmer J.G."/>
            <person name="Thayer N."/>
            <person name="Thompson L.S."/>
            <person name="Tice H."/>
            <person name="Ticknor L.O."/>
            <person name="Wills P.L."/>
            <person name="Gilna P."/>
            <person name="Brettin T.S."/>
        </authorList>
    </citation>
    <scope>NUCLEOTIDE SEQUENCE [LARGE SCALE GENOMIC DNA]</scope>
    <source>
        <strain>Al Hakam</strain>
    </source>
</reference>
<sequence length="231" mass="25255">MRIAVIGAMEEEVRILRDKLEQAETETVAGCEFTKGQLAGHEVILLKSGIGKVNAAMSTTILLERYKPEKVINTGSAGGFHHSLNVGDVVISTEVRHHDVDVTAFNYEYGQVPGMPPGFKADEALVALAEKCMQAEENIQVVKGMIATGDSFMSDPNRVAAIRDKFENLYAVEMEAAAVAQVCHQYEVPFVIIRALSDIAGKESNVSFDQFLDQAALHSTNFIVKVLEELK</sequence>
<organism>
    <name type="scientific">Bacillus thuringiensis (strain Al Hakam)</name>
    <dbReference type="NCBI Taxonomy" id="412694"/>
    <lineage>
        <taxon>Bacteria</taxon>
        <taxon>Bacillati</taxon>
        <taxon>Bacillota</taxon>
        <taxon>Bacilli</taxon>
        <taxon>Bacillales</taxon>
        <taxon>Bacillaceae</taxon>
        <taxon>Bacillus</taxon>
        <taxon>Bacillus cereus group</taxon>
    </lineage>
</organism>